<organism>
    <name type="scientific">Clostridium perfringens (strain ATCC 13124 / DSM 756 / JCM 1290 / NCIMB 6125 / NCTC 8237 / Type A)</name>
    <dbReference type="NCBI Taxonomy" id="195103"/>
    <lineage>
        <taxon>Bacteria</taxon>
        <taxon>Bacillati</taxon>
        <taxon>Bacillota</taxon>
        <taxon>Clostridia</taxon>
        <taxon>Eubacteriales</taxon>
        <taxon>Clostridiaceae</taxon>
        <taxon>Clostridium</taxon>
    </lineage>
</organism>
<accession>Q0TQY8</accession>
<reference key="1">
    <citation type="journal article" date="2006" name="Genome Res.">
        <title>Skewed genomic variability in strains of the toxigenic bacterial pathogen, Clostridium perfringens.</title>
        <authorList>
            <person name="Myers G.S.A."/>
            <person name="Rasko D.A."/>
            <person name="Cheung J.K."/>
            <person name="Ravel J."/>
            <person name="Seshadri R."/>
            <person name="DeBoy R.T."/>
            <person name="Ren Q."/>
            <person name="Varga J."/>
            <person name="Awad M.M."/>
            <person name="Brinkac L.M."/>
            <person name="Daugherty S.C."/>
            <person name="Haft D.H."/>
            <person name="Dodson R.J."/>
            <person name="Madupu R."/>
            <person name="Nelson W.C."/>
            <person name="Rosovitz M.J."/>
            <person name="Sullivan S.A."/>
            <person name="Khouri H."/>
            <person name="Dimitrov G.I."/>
            <person name="Watkins K.L."/>
            <person name="Mulligan S."/>
            <person name="Benton J."/>
            <person name="Radune D."/>
            <person name="Fisher D.J."/>
            <person name="Atkins H.S."/>
            <person name="Hiscox T."/>
            <person name="Jost B.H."/>
            <person name="Billington S.J."/>
            <person name="Songer J.G."/>
            <person name="McClane B.A."/>
            <person name="Titball R.W."/>
            <person name="Rood J.I."/>
            <person name="Melville S.B."/>
            <person name="Paulsen I.T."/>
        </authorList>
    </citation>
    <scope>NUCLEOTIDE SEQUENCE [LARGE SCALE GENOMIC DNA]</scope>
    <source>
        <strain>ATCC 13124 / DSM 756 / JCM 1290 / NCIMB 6125 / NCTC 8237 / S 107 / Type A</strain>
    </source>
</reference>
<evidence type="ECO:0000255" key="1">
    <source>
        <dbReference type="HAMAP-Rule" id="MF_00147"/>
    </source>
</evidence>
<feature type="chain" id="PRO_0000307450" description="Triosephosphate isomerase">
    <location>
        <begin position="1"/>
        <end position="248"/>
    </location>
</feature>
<feature type="active site" description="Electrophile" evidence="1">
    <location>
        <position position="94"/>
    </location>
</feature>
<feature type="active site" description="Proton acceptor" evidence="1">
    <location>
        <position position="166"/>
    </location>
</feature>
<feature type="binding site" evidence="1">
    <location>
        <begin position="9"/>
        <end position="11"/>
    </location>
    <ligand>
        <name>substrate</name>
    </ligand>
</feature>
<feature type="binding site" evidence="1">
    <location>
        <position position="172"/>
    </location>
    <ligand>
        <name>substrate</name>
    </ligand>
</feature>
<feature type="binding site" evidence="1">
    <location>
        <position position="212"/>
    </location>
    <ligand>
        <name>substrate</name>
    </ligand>
</feature>
<feature type="binding site" evidence="1">
    <location>
        <begin position="233"/>
        <end position="234"/>
    </location>
    <ligand>
        <name>substrate</name>
    </ligand>
</feature>
<keyword id="KW-0963">Cytoplasm</keyword>
<keyword id="KW-0312">Gluconeogenesis</keyword>
<keyword id="KW-0324">Glycolysis</keyword>
<keyword id="KW-0413">Isomerase</keyword>
<sequence length="248" mass="27058">MRTPIIAGNWKMHYTIDEAVKLVEELKPLVKDAKCEVVVCPTFVCLDAVKKAVEGTNIKVGAQNMHFEEKGAFTGEIAPRMLEAMNIDYVIIGHSERREYFNETDETCNKKVKAAFAHNLTPILCCGETLEQRENGTTNDVIKAQITADLEGLTKEQAEKVVIAYEPIWAIGTGKTATSDQANETIAAIRAMVAEMFGQEVADKVRIQYGGSVKPNTIAEQMAKSDIDGALVGGASLVAADFAQIVNY</sequence>
<protein>
    <recommendedName>
        <fullName evidence="1">Triosephosphate isomerase</fullName>
        <shortName evidence="1">TIM</shortName>
        <shortName evidence="1">TPI</shortName>
        <ecNumber evidence="1">5.3.1.1</ecNumber>
    </recommendedName>
    <alternativeName>
        <fullName evidence="1">Triose-phosphate isomerase</fullName>
    </alternativeName>
</protein>
<gene>
    <name evidence="1" type="primary">tpiA</name>
    <name type="ordered locus">CPF_1509</name>
</gene>
<comment type="function">
    <text evidence="1">Involved in the gluconeogenesis. Catalyzes stereospecifically the conversion of dihydroxyacetone phosphate (DHAP) to D-glyceraldehyde-3-phosphate (G3P).</text>
</comment>
<comment type="catalytic activity">
    <reaction evidence="1">
        <text>D-glyceraldehyde 3-phosphate = dihydroxyacetone phosphate</text>
        <dbReference type="Rhea" id="RHEA:18585"/>
        <dbReference type="ChEBI" id="CHEBI:57642"/>
        <dbReference type="ChEBI" id="CHEBI:59776"/>
        <dbReference type="EC" id="5.3.1.1"/>
    </reaction>
</comment>
<comment type="pathway">
    <text evidence="1">Carbohydrate biosynthesis; gluconeogenesis.</text>
</comment>
<comment type="pathway">
    <text evidence="1">Carbohydrate degradation; glycolysis; D-glyceraldehyde 3-phosphate from glycerone phosphate: step 1/1.</text>
</comment>
<comment type="subunit">
    <text evidence="1">Homodimer.</text>
</comment>
<comment type="subcellular location">
    <subcellularLocation>
        <location evidence="1">Cytoplasm</location>
    </subcellularLocation>
</comment>
<comment type="similarity">
    <text evidence="1">Belongs to the triosephosphate isomerase family.</text>
</comment>
<proteinExistence type="inferred from homology"/>
<dbReference type="EC" id="5.3.1.1" evidence="1"/>
<dbReference type="EMBL" id="CP000246">
    <property type="protein sequence ID" value="ABG82634.1"/>
    <property type="molecule type" value="Genomic_DNA"/>
</dbReference>
<dbReference type="RefSeq" id="WP_003450470.1">
    <property type="nucleotide sequence ID" value="NC_008261.1"/>
</dbReference>
<dbReference type="SMR" id="Q0TQY8"/>
<dbReference type="STRING" id="195103.CPF_1509"/>
<dbReference type="PaxDb" id="195103-CPF_1509"/>
<dbReference type="GeneID" id="93002163"/>
<dbReference type="KEGG" id="cpf:CPF_1509"/>
<dbReference type="eggNOG" id="COG0149">
    <property type="taxonomic scope" value="Bacteria"/>
</dbReference>
<dbReference type="HOGENOM" id="CLU_024251_2_3_9"/>
<dbReference type="UniPathway" id="UPA00109">
    <property type="reaction ID" value="UER00189"/>
</dbReference>
<dbReference type="UniPathway" id="UPA00138"/>
<dbReference type="Proteomes" id="UP000001823">
    <property type="component" value="Chromosome"/>
</dbReference>
<dbReference type="GO" id="GO:0005829">
    <property type="term" value="C:cytosol"/>
    <property type="evidence" value="ECO:0007669"/>
    <property type="project" value="TreeGrafter"/>
</dbReference>
<dbReference type="GO" id="GO:0004807">
    <property type="term" value="F:triose-phosphate isomerase activity"/>
    <property type="evidence" value="ECO:0007669"/>
    <property type="project" value="UniProtKB-UniRule"/>
</dbReference>
<dbReference type="GO" id="GO:0006094">
    <property type="term" value="P:gluconeogenesis"/>
    <property type="evidence" value="ECO:0007669"/>
    <property type="project" value="UniProtKB-UniRule"/>
</dbReference>
<dbReference type="GO" id="GO:0046166">
    <property type="term" value="P:glyceraldehyde-3-phosphate biosynthetic process"/>
    <property type="evidence" value="ECO:0007669"/>
    <property type="project" value="TreeGrafter"/>
</dbReference>
<dbReference type="GO" id="GO:0019563">
    <property type="term" value="P:glycerol catabolic process"/>
    <property type="evidence" value="ECO:0007669"/>
    <property type="project" value="TreeGrafter"/>
</dbReference>
<dbReference type="GO" id="GO:0006096">
    <property type="term" value="P:glycolytic process"/>
    <property type="evidence" value="ECO:0007669"/>
    <property type="project" value="UniProtKB-UniRule"/>
</dbReference>
<dbReference type="CDD" id="cd00311">
    <property type="entry name" value="TIM"/>
    <property type="match status" value="1"/>
</dbReference>
<dbReference type="FunFam" id="3.20.20.70:FF:000016">
    <property type="entry name" value="Triosephosphate isomerase"/>
    <property type="match status" value="1"/>
</dbReference>
<dbReference type="Gene3D" id="3.20.20.70">
    <property type="entry name" value="Aldolase class I"/>
    <property type="match status" value="1"/>
</dbReference>
<dbReference type="HAMAP" id="MF_00147_B">
    <property type="entry name" value="TIM_B"/>
    <property type="match status" value="1"/>
</dbReference>
<dbReference type="InterPro" id="IPR013785">
    <property type="entry name" value="Aldolase_TIM"/>
</dbReference>
<dbReference type="InterPro" id="IPR035990">
    <property type="entry name" value="TIM_sf"/>
</dbReference>
<dbReference type="InterPro" id="IPR022896">
    <property type="entry name" value="TrioseP_Isoase_bac/euk"/>
</dbReference>
<dbReference type="InterPro" id="IPR000652">
    <property type="entry name" value="Triosephosphate_isomerase"/>
</dbReference>
<dbReference type="InterPro" id="IPR020861">
    <property type="entry name" value="Triosephosphate_isomerase_AS"/>
</dbReference>
<dbReference type="NCBIfam" id="TIGR00419">
    <property type="entry name" value="tim"/>
    <property type="match status" value="1"/>
</dbReference>
<dbReference type="PANTHER" id="PTHR21139">
    <property type="entry name" value="TRIOSEPHOSPHATE ISOMERASE"/>
    <property type="match status" value="1"/>
</dbReference>
<dbReference type="PANTHER" id="PTHR21139:SF42">
    <property type="entry name" value="TRIOSEPHOSPHATE ISOMERASE"/>
    <property type="match status" value="1"/>
</dbReference>
<dbReference type="Pfam" id="PF00121">
    <property type="entry name" value="TIM"/>
    <property type="match status" value="1"/>
</dbReference>
<dbReference type="SUPFAM" id="SSF51351">
    <property type="entry name" value="Triosephosphate isomerase (TIM)"/>
    <property type="match status" value="1"/>
</dbReference>
<dbReference type="PROSITE" id="PS00171">
    <property type="entry name" value="TIM_1"/>
    <property type="match status" value="1"/>
</dbReference>
<dbReference type="PROSITE" id="PS51440">
    <property type="entry name" value="TIM_2"/>
    <property type="match status" value="1"/>
</dbReference>
<name>TPIS_CLOP1</name>